<organism>
    <name type="scientific">Lonchophylla chocoana</name>
    <name type="common">Choco nectar bat</name>
    <dbReference type="NCBI Taxonomy" id="237984"/>
    <lineage>
        <taxon>Eukaryota</taxon>
        <taxon>Metazoa</taxon>
        <taxon>Chordata</taxon>
        <taxon>Craniata</taxon>
        <taxon>Vertebrata</taxon>
        <taxon>Euteleostomi</taxon>
        <taxon>Mammalia</taxon>
        <taxon>Eutheria</taxon>
        <taxon>Laurasiatheria</taxon>
        <taxon>Chiroptera</taxon>
        <taxon>Yangochiroptera</taxon>
        <taxon>Phyllostomidae</taxon>
        <taxon>Lonchophyllinae</taxon>
        <taxon>Lonchophylla</taxon>
    </lineage>
</organism>
<comment type="function">
    <text evidence="2">Component of the ubiquinol-cytochrome c reductase complex (complex III or cytochrome b-c1 complex) that is part of the mitochondrial respiratory chain. The b-c1 complex mediates electron transfer from ubiquinol to cytochrome c. Contributes to the generation of a proton gradient across the mitochondrial membrane that is then used for ATP synthesis.</text>
</comment>
<comment type="cofactor">
    <cofactor evidence="2">
        <name>heme b</name>
        <dbReference type="ChEBI" id="CHEBI:60344"/>
    </cofactor>
    <text evidence="2">Binds 2 heme b groups non-covalently.</text>
</comment>
<comment type="subunit">
    <text evidence="2">The cytochrome bc1 complex contains 11 subunits: 3 respiratory subunits (MT-CYB, CYC1 and UQCRFS1), 2 core proteins (UQCRC1 and UQCRC2) and 6 low-molecular weight proteins (UQCRH/QCR6, UQCRB/QCR7, UQCRQ/QCR8, UQCR10/QCR9, UQCR11/QCR10 and a cleavage product of UQCRFS1). This cytochrome bc1 complex then forms a dimer.</text>
</comment>
<comment type="subcellular location">
    <subcellularLocation>
        <location evidence="2">Mitochondrion inner membrane</location>
        <topology evidence="2">Multi-pass membrane protein</topology>
    </subcellularLocation>
</comment>
<comment type="miscellaneous">
    <text evidence="1">Heme 1 (or BL or b562) is low-potential and absorbs at about 562 nm, and heme 2 (or BH or b566) is high-potential and absorbs at about 566 nm.</text>
</comment>
<comment type="similarity">
    <text evidence="3 4">Belongs to the cytochrome b family.</text>
</comment>
<comment type="caution">
    <text evidence="2">The full-length protein contains only eight transmembrane helices, not nine as predicted by bioinformatics tools.</text>
</comment>
<reference key="1">
    <citation type="journal article" date="2004" name="Am. Mus. Novit.">
        <title>A new chocoan species of Lonchophylla (Chiroptera: Phyllostomidae).</title>
        <authorList>
            <person name="Davalos L.M."/>
        </authorList>
    </citation>
    <scope>NUCLEOTIDE SEQUENCE [GENOMIC DNA]</scope>
</reference>
<feature type="chain" id="PRO_0000254708" description="Cytochrome b">
    <location>
        <begin position="1"/>
        <end position="379"/>
    </location>
</feature>
<feature type="transmembrane region" description="Helical" evidence="2">
    <location>
        <begin position="33"/>
        <end position="53"/>
    </location>
</feature>
<feature type="transmembrane region" description="Helical" evidence="2">
    <location>
        <begin position="77"/>
        <end position="98"/>
    </location>
</feature>
<feature type="transmembrane region" description="Helical" evidence="2">
    <location>
        <begin position="113"/>
        <end position="133"/>
    </location>
</feature>
<feature type="transmembrane region" description="Helical" evidence="2">
    <location>
        <begin position="178"/>
        <end position="198"/>
    </location>
</feature>
<feature type="transmembrane region" description="Helical" evidence="2">
    <location>
        <begin position="226"/>
        <end position="246"/>
    </location>
</feature>
<feature type="transmembrane region" description="Helical" evidence="2">
    <location>
        <begin position="288"/>
        <end position="308"/>
    </location>
</feature>
<feature type="transmembrane region" description="Helical" evidence="2">
    <location>
        <begin position="320"/>
        <end position="340"/>
    </location>
</feature>
<feature type="transmembrane region" description="Helical" evidence="2">
    <location>
        <begin position="347"/>
        <end position="367"/>
    </location>
</feature>
<feature type="binding site" description="axial binding residue" evidence="2">
    <location>
        <position position="83"/>
    </location>
    <ligand>
        <name>heme b</name>
        <dbReference type="ChEBI" id="CHEBI:60344"/>
        <label>b562</label>
    </ligand>
    <ligandPart>
        <name>Fe</name>
        <dbReference type="ChEBI" id="CHEBI:18248"/>
    </ligandPart>
</feature>
<feature type="binding site" description="axial binding residue" evidence="2">
    <location>
        <position position="97"/>
    </location>
    <ligand>
        <name>heme b</name>
        <dbReference type="ChEBI" id="CHEBI:60344"/>
        <label>b566</label>
    </ligand>
    <ligandPart>
        <name>Fe</name>
        <dbReference type="ChEBI" id="CHEBI:18248"/>
    </ligandPart>
</feature>
<feature type="binding site" description="axial binding residue" evidence="2">
    <location>
        <position position="182"/>
    </location>
    <ligand>
        <name>heme b</name>
        <dbReference type="ChEBI" id="CHEBI:60344"/>
        <label>b562</label>
    </ligand>
    <ligandPart>
        <name>Fe</name>
        <dbReference type="ChEBI" id="CHEBI:18248"/>
    </ligandPart>
</feature>
<feature type="binding site" description="axial binding residue" evidence="2">
    <location>
        <position position="196"/>
    </location>
    <ligand>
        <name>heme b</name>
        <dbReference type="ChEBI" id="CHEBI:60344"/>
        <label>b566</label>
    </ligand>
    <ligandPart>
        <name>Fe</name>
        <dbReference type="ChEBI" id="CHEBI:18248"/>
    </ligandPart>
</feature>
<feature type="binding site" evidence="2">
    <location>
        <position position="201"/>
    </location>
    <ligand>
        <name>a ubiquinone</name>
        <dbReference type="ChEBI" id="CHEBI:16389"/>
    </ligand>
</feature>
<accession>Q7YD16</accession>
<name>CYB_LONCH</name>
<geneLocation type="mitochondrion"/>
<evidence type="ECO:0000250" key="1"/>
<evidence type="ECO:0000250" key="2">
    <source>
        <dbReference type="UniProtKB" id="P00157"/>
    </source>
</evidence>
<evidence type="ECO:0000255" key="3">
    <source>
        <dbReference type="PROSITE-ProRule" id="PRU00967"/>
    </source>
</evidence>
<evidence type="ECO:0000255" key="4">
    <source>
        <dbReference type="PROSITE-ProRule" id="PRU00968"/>
    </source>
</evidence>
<gene>
    <name type="primary">MT-CYB</name>
    <name type="synonym">COB</name>
    <name type="synonym">CYTB</name>
    <name type="synonym">MTCYB</name>
</gene>
<sequence length="379" mass="42611">MTNIRKTHPLLKILNSSFVDLPTPSSLSSWWNFGSLLGVCLAVQILTGLFLAMHYTADTATAFDSVTHICRDVNYGWVLRYMHANGASMFFICLYLHVGRGLYYGSYTYTETWNIGILLLFAVMATAFMGYVLPWGQMSFWGATVITNLLSAIPYIGTELVQWIWGGFSVDKATLTRFFAFHFLLPFIVTALVMVHLLFLHETGSNNPTGIPSDPDMIPFHPYYTIKDILGFLIMLTALSTLVLFSPDLLGDPDNYTPANPLNTPPHIKPEWYFLFAYAILRSIPNKLGGVLALVLSILVLAIVPVLHTSKQRSMMFRPLSQCLFWLLVATLLTLTWIGGQPVEYPYVIIGQTASVLYFMILLVLMPLTSIVENKLLKW</sequence>
<keyword id="KW-0249">Electron transport</keyword>
<keyword id="KW-0349">Heme</keyword>
<keyword id="KW-0408">Iron</keyword>
<keyword id="KW-0472">Membrane</keyword>
<keyword id="KW-0479">Metal-binding</keyword>
<keyword id="KW-0496">Mitochondrion</keyword>
<keyword id="KW-0999">Mitochondrion inner membrane</keyword>
<keyword id="KW-0679">Respiratory chain</keyword>
<keyword id="KW-0812">Transmembrane</keyword>
<keyword id="KW-1133">Transmembrane helix</keyword>
<keyword id="KW-0813">Transport</keyword>
<keyword id="KW-0830">Ubiquinone</keyword>
<dbReference type="EMBL" id="AF423092">
    <property type="protein sequence ID" value="AAP80160.1"/>
    <property type="molecule type" value="Genomic_DNA"/>
</dbReference>
<dbReference type="SMR" id="Q7YD16"/>
<dbReference type="GO" id="GO:0005743">
    <property type="term" value="C:mitochondrial inner membrane"/>
    <property type="evidence" value="ECO:0007669"/>
    <property type="project" value="UniProtKB-SubCell"/>
</dbReference>
<dbReference type="GO" id="GO:0045275">
    <property type="term" value="C:respiratory chain complex III"/>
    <property type="evidence" value="ECO:0007669"/>
    <property type="project" value="InterPro"/>
</dbReference>
<dbReference type="GO" id="GO:0046872">
    <property type="term" value="F:metal ion binding"/>
    <property type="evidence" value="ECO:0007669"/>
    <property type="project" value="UniProtKB-KW"/>
</dbReference>
<dbReference type="GO" id="GO:0008121">
    <property type="term" value="F:ubiquinol-cytochrome-c reductase activity"/>
    <property type="evidence" value="ECO:0007669"/>
    <property type="project" value="InterPro"/>
</dbReference>
<dbReference type="GO" id="GO:0006122">
    <property type="term" value="P:mitochondrial electron transport, ubiquinol to cytochrome c"/>
    <property type="evidence" value="ECO:0007669"/>
    <property type="project" value="TreeGrafter"/>
</dbReference>
<dbReference type="CDD" id="cd00290">
    <property type="entry name" value="cytochrome_b_C"/>
    <property type="match status" value="1"/>
</dbReference>
<dbReference type="CDD" id="cd00284">
    <property type="entry name" value="Cytochrome_b_N"/>
    <property type="match status" value="1"/>
</dbReference>
<dbReference type="FunFam" id="1.20.810.10:FF:000002">
    <property type="entry name" value="Cytochrome b"/>
    <property type="match status" value="1"/>
</dbReference>
<dbReference type="Gene3D" id="1.20.810.10">
    <property type="entry name" value="Cytochrome Bc1 Complex, Chain C"/>
    <property type="match status" value="1"/>
</dbReference>
<dbReference type="InterPro" id="IPR005798">
    <property type="entry name" value="Cyt_b/b6_C"/>
</dbReference>
<dbReference type="InterPro" id="IPR036150">
    <property type="entry name" value="Cyt_b/b6_C_sf"/>
</dbReference>
<dbReference type="InterPro" id="IPR005797">
    <property type="entry name" value="Cyt_b/b6_N"/>
</dbReference>
<dbReference type="InterPro" id="IPR027387">
    <property type="entry name" value="Cytb/b6-like_sf"/>
</dbReference>
<dbReference type="InterPro" id="IPR030689">
    <property type="entry name" value="Cytochrome_b"/>
</dbReference>
<dbReference type="InterPro" id="IPR048260">
    <property type="entry name" value="Cytochrome_b_C_euk/bac"/>
</dbReference>
<dbReference type="InterPro" id="IPR048259">
    <property type="entry name" value="Cytochrome_b_N_euk/bac"/>
</dbReference>
<dbReference type="InterPro" id="IPR016174">
    <property type="entry name" value="Di-haem_cyt_TM"/>
</dbReference>
<dbReference type="PANTHER" id="PTHR19271">
    <property type="entry name" value="CYTOCHROME B"/>
    <property type="match status" value="1"/>
</dbReference>
<dbReference type="PANTHER" id="PTHR19271:SF16">
    <property type="entry name" value="CYTOCHROME B"/>
    <property type="match status" value="1"/>
</dbReference>
<dbReference type="Pfam" id="PF00032">
    <property type="entry name" value="Cytochrom_B_C"/>
    <property type="match status" value="1"/>
</dbReference>
<dbReference type="Pfam" id="PF00033">
    <property type="entry name" value="Cytochrome_B"/>
    <property type="match status" value="1"/>
</dbReference>
<dbReference type="PIRSF" id="PIRSF038885">
    <property type="entry name" value="COB"/>
    <property type="match status" value="1"/>
</dbReference>
<dbReference type="SUPFAM" id="SSF81648">
    <property type="entry name" value="a domain/subunit of cytochrome bc1 complex (Ubiquinol-cytochrome c reductase)"/>
    <property type="match status" value="1"/>
</dbReference>
<dbReference type="SUPFAM" id="SSF81342">
    <property type="entry name" value="Transmembrane di-heme cytochromes"/>
    <property type="match status" value="1"/>
</dbReference>
<dbReference type="PROSITE" id="PS51003">
    <property type="entry name" value="CYTB_CTER"/>
    <property type="match status" value="1"/>
</dbReference>
<dbReference type="PROSITE" id="PS51002">
    <property type="entry name" value="CYTB_NTER"/>
    <property type="match status" value="1"/>
</dbReference>
<proteinExistence type="inferred from homology"/>
<protein>
    <recommendedName>
        <fullName>Cytochrome b</fullName>
    </recommendedName>
    <alternativeName>
        <fullName>Complex III subunit 3</fullName>
    </alternativeName>
    <alternativeName>
        <fullName>Complex III subunit III</fullName>
    </alternativeName>
    <alternativeName>
        <fullName>Cytochrome b-c1 complex subunit 3</fullName>
    </alternativeName>
    <alternativeName>
        <fullName>Ubiquinol-cytochrome-c reductase complex cytochrome b subunit</fullName>
    </alternativeName>
</protein>